<comment type="function">
    <text evidence="1">Inhibitor of shell growth.</text>
</comment>
<comment type="PTM">
    <text evidence="1">Contains four disulfide bonds.</text>
</comment>
<organism>
    <name type="scientific">Haliotis laevigata</name>
    <name type="common">Smooth Australian abalone</name>
    <dbReference type="NCBI Taxonomy" id="36097"/>
    <lineage>
        <taxon>Eukaryota</taxon>
        <taxon>Metazoa</taxon>
        <taxon>Spiralia</taxon>
        <taxon>Lophotrochozoa</taxon>
        <taxon>Mollusca</taxon>
        <taxon>Gastropoda</taxon>
        <taxon>Vetigastropoda</taxon>
        <taxon>Lepetellida</taxon>
        <taxon>Haliotoidea</taxon>
        <taxon>Haliotidae</taxon>
        <taxon>Haliotis</taxon>
    </lineage>
</organism>
<feature type="chain" id="PRO_0000293623" description="Perlinhibin-related protein">
    <location>
        <begin position="1"/>
        <end position="42"/>
    </location>
</feature>
<accession>P85036</accession>
<sequence length="42" mass="4545">ECNIGDICVVHGDCSECKCSDGRAAKCDREHGEPPHCSCSHR</sequence>
<reference evidence="3" key="1">
    <citation type="journal article" date="2007" name="Biophys. J.">
        <title>Perlinhibin, a cysteine-, histidine- and arginine-rich miniprotein from abalone (Haliotis laevigata) nacre inhibits in vitro calcium carbonate crystallization.</title>
        <authorList>
            <person name="Mann K."/>
            <person name="Siedler F."/>
            <person name="Treccani L."/>
            <person name="Heinemann F."/>
            <person name="Fritz M."/>
        </authorList>
    </citation>
    <scope>PROTEIN SEQUENCE</scope>
    <source>
        <tissue evidence="2">Shell</tissue>
    </source>
</reference>
<protein>
    <recommendedName>
        <fullName>Perlinhibin-related protein</fullName>
    </recommendedName>
</protein>
<proteinExistence type="evidence at protein level"/>
<keyword id="KW-0903">Direct protein sequencing</keyword>
<keyword id="KW-1015">Disulfide bond</keyword>
<evidence type="ECO:0000250" key="1">
    <source>
        <dbReference type="UniProtKB" id="P85035"/>
    </source>
</evidence>
<evidence type="ECO:0000269" key="2">
    <source>
    </source>
</evidence>
<evidence type="ECO:0000305" key="3"/>
<name>PLINR_HALLA</name>